<sequence length="290" mass="31378">ANSNSRPHLLQTQKPFSVVLAISITFYLLLLNKVNSEEALSFTFTKFVSNQDELLLQGDALVSSKGELQLTRVENGQPIPHSVGRALYSDPVHIWDSSTGSVASFVTSFTFVVEAPNENKTADGIAFFLAPPDTQVQSLGGFLGLFNSSVYNSSNQILAVEFDTFSNSWDPTARHIGIDVNSIESTRTATWGWRNGEVAIVLITYVAPAETLIASLTYPSSQTSYILSAAVDLKSILPEWVRVGFSAATGRSAGYVETHDVLSWSFTSTLETGNSGAKQNNAHLASYALI</sequence>
<dbReference type="EMBL" id="U21940">
    <property type="protein sequence ID" value="AAC49150.1"/>
    <property type="molecule type" value="mRNA"/>
</dbReference>
<dbReference type="PIR" id="S66355">
    <property type="entry name" value="S66355"/>
</dbReference>
<dbReference type="SMR" id="Q39527"/>
<dbReference type="GO" id="GO:0030246">
    <property type="term" value="F:carbohydrate binding"/>
    <property type="evidence" value="ECO:0007669"/>
    <property type="project" value="UniProtKB-KW"/>
</dbReference>
<dbReference type="GO" id="GO:0046872">
    <property type="term" value="F:metal ion binding"/>
    <property type="evidence" value="ECO:0007669"/>
    <property type="project" value="UniProtKB-KW"/>
</dbReference>
<dbReference type="CDD" id="cd06899">
    <property type="entry name" value="lectin_legume_LecRK_Arcelin_ConA"/>
    <property type="match status" value="1"/>
</dbReference>
<dbReference type="Gene3D" id="2.60.120.200">
    <property type="match status" value="1"/>
</dbReference>
<dbReference type="InterPro" id="IPR013320">
    <property type="entry name" value="ConA-like_dom_sf"/>
</dbReference>
<dbReference type="InterPro" id="IPR016363">
    <property type="entry name" value="L-lectin"/>
</dbReference>
<dbReference type="InterPro" id="IPR000985">
    <property type="entry name" value="Lectin_LegA_CS"/>
</dbReference>
<dbReference type="InterPro" id="IPR019825">
    <property type="entry name" value="Lectin_legB_Mn/Ca_BS"/>
</dbReference>
<dbReference type="InterPro" id="IPR001220">
    <property type="entry name" value="Legume_lectin_dom"/>
</dbReference>
<dbReference type="InterPro" id="IPR050258">
    <property type="entry name" value="Leguminous_Lectin"/>
</dbReference>
<dbReference type="PANTHER" id="PTHR32401">
    <property type="entry name" value="CONCANAVALIN A-LIKE LECTIN FAMILY PROTEIN"/>
    <property type="match status" value="1"/>
</dbReference>
<dbReference type="PANTHER" id="PTHR32401:SF45">
    <property type="entry name" value="LECTIN"/>
    <property type="match status" value="1"/>
</dbReference>
<dbReference type="Pfam" id="PF00139">
    <property type="entry name" value="Lectin_legB"/>
    <property type="match status" value="1"/>
</dbReference>
<dbReference type="PIRSF" id="PIRSF002690">
    <property type="entry name" value="L-type_lectin_plant"/>
    <property type="match status" value="1"/>
</dbReference>
<dbReference type="SUPFAM" id="SSF49899">
    <property type="entry name" value="Concanavalin A-like lectins/glucanases"/>
    <property type="match status" value="1"/>
</dbReference>
<dbReference type="PROSITE" id="PS00308">
    <property type="entry name" value="LECTIN_LEGUME_ALPHA"/>
    <property type="match status" value="1"/>
</dbReference>
<dbReference type="PROSITE" id="PS00307">
    <property type="entry name" value="LECTIN_LEGUME_BETA"/>
    <property type="match status" value="1"/>
</dbReference>
<organism>
    <name type="scientific">Cladrastis kentukea</name>
    <name type="common">Yellow wood</name>
    <name type="synonym">Cladrastis lutea</name>
    <dbReference type="NCBI Taxonomy" id="38412"/>
    <lineage>
        <taxon>Eukaryota</taxon>
        <taxon>Viridiplantae</taxon>
        <taxon>Streptophyta</taxon>
        <taxon>Embryophyta</taxon>
        <taxon>Tracheophyta</taxon>
        <taxon>Spermatophyta</taxon>
        <taxon>Magnoliopsida</taxon>
        <taxon>eudicotyledons</taxon>
        <taxon>Gunneridae</taxon>
        <taxon>Pentapetalae</taxon>
        <taxon>rosids</taxon>
        <taxon>fabids</taxon>
        <taxon>Fabales</taxon>
        <taxon>Fabaceae</taxon>
        <taxon>Papilionoideae</taxon>
        <taxon>Cladrastis clade</taxon>
        <taxon>Cladrastis</taxon>
    </lineage>
</organism>
<keyword id="KW-0106">Calcium</keyword>
<keyword id="KW-0903">Direct protein sequencing</keyword>
<keyword id="KW-0325">Glycoprotein</keyword>
<keyword id="KW-0430">Lectin</keyword>
<keyword id="KW-0464">Manganese</keyword>
<keyword id="KW-0479">Metal-binding</keyword>
<keyword id="KW-0732">Signal</keyword>
<proteinExistence type="evidence at protein level"/>
<feature type="signal peptide" evidence="3">
    <location>
        <begin position="1" status="less than"/>
        <end position="36"/>
    </location>
</feature>
<feature type="chain" id="PRO_0000017653" description="Lectin-related protein">
    <location>
        <begin position="37"/>
        <end position="290"/>
    </location>
</feature>
<feature type="binding site" evidence="1">
    <location>
        <position position="161"/>
    </location>
    <ligand>
        <name>Mn(2+)</name>
        <dbReference type="ChEBI" id="CHEBI:29035"/>
    </ligand>
</feature>
<feature type="binding site" evidence="1">
    <location>
        <position position="163"/>
    </location>
    <ligand>
        <name>Ca(2+)</name>
        <dbReference type="ChEBI" id="CHEBI:29108"/>
    </ligand>
</feature>
<feature type="binding site" evidence="1">
    <location>
        <position position="163"/>
    </location>
    <ligand>
        <name>Mn(2+)</name>
        <dbReference type="ChEBI" id="CHEBI:29035"/>
    </ligand>
</feature>
<feature type="binding site" evidence="1">
    <location>
        <position position="167"/>
    </location>
    <ligand>
        <name>Ca(2+)</name>
        <dbReference type="ChEBI" id="CHEBI:29108"/>
    </ligand>
</feature>
<feature type="binding site" evidence="1">
    <location>
        <position position="170"/>
    </location>
    <ligand>
        <name>Ca(2+)</name>
        <dbReference type="ChEBI" id="CHEBI:29108"/>
    </ligand>
</feature>
<feature type="binding site" evidence="1">
    <location>
        <position position="170"/>
    </location>
    <ligand>
        <name>Mn(2+)</name>
        <dbReference type="ChEBI" id="CHEBI:29035"/>
    </ligand>
</feature>
<feature type="binding site" evidence="1">
    <location>
        <position position="175"/>
    </location>
    <ligand>
        <name>Mn(2+)</name>
        <dbReference type="ChEBI" id="CHEBI:29035"/>
    </ligand>
</feature>
<feature type="glycosylation site" description="N-linked (GlcNAc...) asparagine" evidence="2">
    <location>
        <position position="119"/>
    </location>
</feature>
<feature type="glycosylation site" description="N-linked (GlcNAc...) asparagine" evidence="2">
    <location>
        <position position="147"/>
    </location>
</feature>
<feature type="glycosylation site" description="N-linked (GlcNAc...) asparagine" evidence="2">
    <location>
        <position position="152"/>
    </location>
</feature>
<feature type="non-terminal residue">
    <location>
        <position position="1"/>
    </location>
</feature>
<comment type="function">
    <text>Does not have any carbohydrate binding or agglutination activity.</text>
</comment>
<comment type="subunit">
    <text>Homotetramer.</text>
</comment>
<comment type="similarity">
    <text evidence="4">Belongs to the leguminous lectin family.</text>
</comment>
<reference key="1">
    <citation type="journal article" date="1995" name="Plant Mol. Biol.">
        <title>A lectin and a lectin-related protein are the two most prominent proteins in the bark of yellow wood (Cladrastis lutea).</title>
        <authorList>
            <person name="van Damme E.J.M."/>
            <person name="Barre A."/>
            <person name="Bemer V."/>
            <person name="Rouge P."/>
            <person name="van Leuven F."/>
            <person name="Peumans W.J."/>
        </authorList>
    </citation>
    <scope>NUCLEOTIDE SEQUENCE [MRNA]</scope>
    <scope>PROTEIN SEQUENCE OF 37-56</scope>
    <source>
        <tissue>Bark</tissue>
    </source>
</reference>
<protein>
    <recommendedName>
        <fullName>Lectin-related protein</fullName>
    </recommendedName>
    <alternativeName>
        <fullName>CLLRP</fullName>
    </alternativeName>
    <alternativeName>
        <fullName>LRPCL</fullName>
    </alternativeName>
</protein>
<evidence type="ECO:0000250" key="1"/>
<evidence type="ECO:0000255" key="2"/>
<evidence type="ECO:0000269" key="3">
    <source>
    </source>
</evidence>
<evidence type="ECO:0000305" key="4"/>
<name>LECR_CLAKE</name>
<accession>Q39527</accession>